<dbReference type="EC" id="3.5.4.2" evidence="1"/>
<dbReference type="EMBL" id="BX640440">
    <property type="protein sequence ID" value="CAE31752.1"/>
    <property type="molecule type" value="Genomic_DNA"/>
</dbReference>
<dbReference type="RefSeq" id="WP_010926108.1">
    <property type="nucleotide sequence ID" value="NC_002927.3"/>
</dbReference>
<dbReference type="SMR" id="Q7WMY6"/>
<dbReference type="KEGG" id="bbr:BB1254"/>
<dbReference type="eggNOG" id="COG1816">
    <property type="taxonomic scope" value="Bacteria"/>
</dbReference>
<dbReference type="HOGENOM" id="CLU_039228_7_0_4"/>
<dbReference type="Proteomes" id="UP000001027">
    <property type="component" value="Chromosome"/>
</dbReference>
<dbReference type="GO" id="GO:0005829">
    <property type="term" value="C:cytosol"/>
    <property type="evidence" value="ECO:0007669"/>
    <property type="project" value="TreeGrafter"/>
</dbReference>
<dbReference type="GO" id="GO:0000034">
    <property type="term" value="F:adenine deaminase activity"/>
    <property type="evidence" value="ECO:0007669"/>
    <property type="project" value="UniProtKB-UniRule"/>
</dbReference>
<dbReference type="GO" id="GO:0008270">
    <property type="term" value="F:zinc ion binding"/>
    <property type="evidence" value="ECO:0007669"/>
    <property type="project" value="UniProtKB-UniRule"/>
</dbReference>
<dbReference type="GO" id="GO:0006146">
    <property type="term" value="P:adenine catabolic process"/>
    <property type="evidence" value="ECO:0007669"/>
    <property type="project" value="UniProtKB-UniRule"/>
</dbReference>
<dbReference type="GO" id="GO:0043103">
    <property type="term" value="P:hypoxanthine salvage"/>
    <property type="evidence" value="ECO:0007669"/>
    <property type="project" value="UniProtKB-UniRule"/>
</dbReference>
<dbReference type="GO" id="GO:0009117">
    <property type="term" value="P:nucleotide metabolic process"/>
    <property type="evidence" value="ECO:0007669"/>
    <property type="project" value="UniProtKB-KW"/>
</dbReference>
<dbReference type="CDD" id="cd01320">
    <property type="entry name" value="ADA"/>
    <property type="match status" value="1"/>
</dbReference>
<dbReference type="FunFam" id="3.20.20.140:FF:000039">
    <property type="entry name" value="Adenine deaminase"/>
    <property type="match status" value="1"/>
</dbReference>
<dbReference type="Gene3D" id="3.20.20.140">
    <property type="entry name" value="Metal-dependent hydrolases"/>
    <property type="match status" value="1"/>
</dbReference>
<dbReference type="HAMAP" id="MF_01962">
    <property type="entry name" value="Adenine_deaminase"/>
    <property type="match status" value="1"/>
</dbReference>
<dbReference type="InterPro" id="IPR001365">
    <property type="entry name" value="A_deaminase_dom"/>
</dbReference>
<dbReference type="InterPro" id="IPR028892">
    <property type="entry name" value="ADE"/>
</dbReference>
<dbReference type="InterPro" id="IPR006330">
    <property type="entry name" value="Ado/ade_deaminase"/>
</dbReference>
<dbReference type="InterPro" id="IPR032466">
    <property type="entry name" value="Metal_Hydrolase"/>
</dbReference>
<dbReference type="NCBIfam" id="TIGR01430">
    <property type="entry name" value="aden_deam"/>
    <property type="match status" value="1"/>
</dbReference>
<dbReference type="NCBIfam" id="NF006850">
    <property type="entry name" value="PRK09358.1-6"/>
    <property type="match status" value="1"/>
</dbReference>
<dbReference type="PANTHER" id="PTHR43114">
    <property type="entry name" value="ADENINE DEAMINASE"/>
    <property type="match status" value="1"/>
</dbReference>
<dbReference type="PANTHER" id="PTHR43114:SF6">
    <property type="entry name" value="ADENINE DEAMINASE"/>
    <property type="match status" value="1"/>
</dbReference>
<dbReference type="Pfam" id="PF00962">
    <property type="entry name" value="A_deaminase"/>
    <property type="match status" value="1"/>
</dbReference>
<dbReference type="SUPFAM" id="SSF51556">
    <property type="entry name" value="Metallo-dependent hydrolases"/>
    <property type="match status" value="1"/>
</dbReference>
<organism>
    <name type="scientific">Bordetella bronchiseptica (strain ATCC BAA-588 / NCTC 13252 / RB50)</name>
    <name type="common">Alcaligenes bronchisepticus</name>
    <dbReference type="NCBI Taxonomy" id="257310"/>
    <lineage>
        <taxon>Bacteria</taxon>
        <taxon>Pseudomonadati</taxon>
        <taxon>Pseudomonadota</taxon>
        <taxon>Betaproteobacteria</taxon>
        <taxon>Burkholderiales</taxon>
        <taxon>Alcaligenaceae</taxon>
        <taxon>Bordetella</taxon>
    </lineage>
</organism>
<reference key="1">
    <citation type="journal article" date="2003" name="Nat. Genet.">
        <title>Comparative analysis of the genome sequences of Bordetella pertussis, Bordetella parapertussis and Bordetella bronchiseptica.</title>
        <authorList>
            <person name="Parkhill J."/>
            <person name="Sebaihia M."/>
            <person name="Preston A."/>
            <person name="Murphy L.D."/>
            <person name="Thomson N.R."/>
            <person name="Harris D.E."/>
            <person name="Holden M.T.G."/>
            <person name="Churcher C.M."/>
            <person name="Bentley S.D."/>
            <person name="Mungall K.L."/>
            <person name="Cerdeno-Tarraga A.-M."/>
            <person name="Temple L."/>
            <person name="James K.D."/>
            <person name="Harris B."/>
            <person name="Quail M.A."/>
            <person name="Achtman M."/>
            <person name="Atkin R."/>
            <person name="Baker S."/>
            <person name="Basham D."/>
            <person name="Bason N."/>
            <person name="Cherevach I."/>
            <person name="Chillingworth T."/>
            <person name="Collins M."/>
            <person name="Cronin A."/>
            <person name="Davis P."/>
            <person name="Doggett J."/>
            <person name="Feltwell T."/>
            <person name="Goble A."/>
            <person name="Hamlin N."/>
            <person name="Hauser H."/>
            <person name="Holroyd S."/>
            <person name="Jagels K."/>
            <person name="Leather S."/>
            <person name="Moule S."/>
            <person name="Norberczak H."/>
            <person name="O'Neil S."/>
            <person name="Ormond D."/>
            <person name="Price C."/>
            <person name="Rabbinowitsch E."/>
            <person name="Rutter S."/>
            <person name="Sanders M."/>
            <person name="Saunders D."/>
            <person name="Seeger K."/>
            <person name="Sharp S."/>
            <person name="Simmonds M."/>
            <person name="Skelton J."/>
            <person name="Squares R."/>
            <person name="Squares S."/>
            <person name="Stevens K."/>
            <person name="Unwin L."/>
            <person name="Whitehead S."/>
            <person name="Barrell B.G."/>
            <person name="Maskell D.J."/>
        </authorList>
    </citation>
    <scope>NUCLEOTIDE SEQUENCE [LARGE SCALE GENOMIC DNA]</scope>
    <source>
        <strain>ATCC BAA-588 / NCTC 13252 / RB50</strain>
    </source>
</reference>
<keyword id="KW-0378">Hydrolase</keyword>
<keyword id="KW-0479">Metal-binding</keyword>
<keyword id="KW-0546">Nucleotide metabolism</keyword>
<keyword id="KW-0862">Zinc</keyword>
<name>ADE_BORBR</name>
<evidence type="ECO:0000255" key="1">
    <source>
        <dbReference type="HAMAP-Rule" id="MF_01962"/>
    </source>
</evidence>
<sequence>MYDWLNALPKAELHLHLEGTLEPGLMFELARRNGVALPWPDVESLRRAYDYDNLQEFLDLYYRGAEVLRTEQDFYDLTWAYLLKCREQNVVHTEPFFDPQTHTDRGIAFETVLAGITQALEDGRTQLGIQGGLILSFLRHLPEEAAMRTLEQALPYRDAFIAVGLDSSERGFPPRLFQRVFERARAAGLPAVAHAGEEGPPEYIWEALDLLQVRRIDHGVRAAEDERLIERLIDTQIPLTVCPLSNTRLRVFDSMAEHNILELLERGVKVTVNSDDPAYFGGYITENFHALHEHLGMTQDQARRLAANSMDARLAGG</sequence>
<protein>
    <recommendedName>
        <fullName evidence="1">Adenine deaminase</fullName>
        <shortName evidence="1">ADE</shortName>
        <ecNumber evidence="1">3.5.4.2</ecNumber>
    </recommendedName>
    <alternativeName>
        <fullName evidence="1">Adenine aminohydrolase</fullName>
        <shortName evidence="1">AAH</shortName>
    </alternativeName>
</protein>
<accession>Q7WMY6</accession>
<comment type="function">
    <text evidence="1">Catalyzes the hydrolytic deamination of adenine to hypoxanthine. Plays an important role in the purine salvage pathway and in nitrogen catabolism.</text>
</comment>
<comment type="catalytic activity">
    <reaction evidence="1">
        <text>adenine + H2O + H(+) = hypoxanthine + NH4(+)</text>
        <dbReference type="Rhea" id="RHEA:23688"/>
        <dbReference type="ChEBI" id="CHEBI:15377"/>
        <dbReference type="ChEBI" id="CHEBI:15378"/>
        <dbReference type="ChEBI" id="CHEBI:16708"/>
        <dbReference type="ChEBI" id="CHEBI:17368"/>
        <dbReference type="ChEBI" id="CHEBI:28938"/>
        <dbReference type="EC" id="3.5.4.2"/>
    </reaction>
</comment>
<comment type="cofactor">
    <cofactor evidence="1">
        <name>Zn(2+)</name>
        <dbReference type="ChEBI" id="CHEBI:29105"/>
    </cofactor>
    <text evidence="1">Binds 1 zinc ion per subunit.</text>
</comment>
<comment type="similarity">
    <text evidence="1">Belongs to the metallo-dependent hydrolases superfamily. Adenosine and AMP deaminases family. Adenine deaminase type 2 subfamily.</text>
</comment>
<feature type="chain" id="PRO_0000194362" description="Adenine deaminase">
    <location>
        <begin position="1"/>
        <end position="317"/>
    </location>
</feature>
<feature type="active site" description="Proton donor" evidence="1">
    <location>
        <position position="197"/>
    </location>
</feature>
<feature type="binding site" evidence="1">
    <location>
        <position position="14"/>
    </location>
    <ligand>
        <name>Zn(2+)</name>
        <dbReference type="ChEBI" id="CHEBI:29105"/>
        <note>catalytic</note>
    </ligand>
</feature>
<feature type="binding site" evidence="1">
    <location>
        <position position="16"/>
    </location>
    <ligand>
        <name>Zn(2+)</name>
        <dbReference type="ChEBI" id="CHEBI:29105"/>
        <note>catalytic</note>
    </ligand>
</feature>
<feature type="binding site" evidence="1">
    <location>
        <position position="194"/>
    </location>
    <ligand>
        <name>Zn(2+)</name>
        <dbReference type="ChEBI" id="CHEBI:29105"/>
        <note>catalytic</note>
    </ligand>
</feature>
<feature type="binding site" evidence="1">
    <location>
        <position position="275"/>
    </location>
    <ligand>
        <name>Zn(2+)</name>
        <dbReference type="ChEBI" id="CHEBI:29105"/>
        <note>catalytic</note>
    </ligand>
</feature>
<feature type="binding site" evidence="1">
    <location>
        <position position="276"/>
    </location>
    <ligand>
        <name>substrate</name>
    </ligand>
</feature>
<feature type="site" description="Important for catalytic activity" evidence="1">
    <location>
        <position position="218"/>
    </location>
</feature>
<gene>
    <name type="ordered locus">BB1254</name>
</gene>
<proteinExistence type="inferred from homology"/>